<feature type="chain" id="PRO_0000079939" description="4-oxalocrotonate decarboxylase">
    <location>
        <begin position="1"/>
        <end position="264"/>
    </location>
</feature>
<gene>
    <name type="primary">dmpH</name>
</gene>
<proteinExistence type="inferred from homology"/>
<organism>
    <name type="scientific">Pseudomonas sp. (strain CF600)</name>
    <dbReference type="NCBI Taxonomy" id="79676"/>
    <lineage>
        <taxon>Bacteria</taxon>
        <taxon>Pseudomonadati</taxon>
        <taxon>Pseudomonadota</taxon>
    </lineage>
</organism>
<dbReference type="EC" id="4.1.1.77"/>
<dbReference type="EMBL" id="X60835">
    <property type="protein sequence ID" value="CAA43228.1"/>
    <property type="molecule type" value="Genomic_DNA"/>
</dbReference>
<dbReference type="SMR" id="P49156"/>
<dbReference type="KEGG" id="ag:CAA43228"/>
<dbReference type="UniPathway" id="UPA00156"/>
<dbReference type="GO" id="GO:0005737">
    <property type="term" value="C:cytoplasm"/>
    <property type="evidence" value="ECO:0007669"/>
    <property type="project" value="TreeGrafter"/>
</dbReference>
<dbReference type="GO" id="GO:0008684">
    <property type="term" value="F:2-oxopent-4-enoate hydratase activity"/>
    <property type="evidence" value="ECO:0007669"/>
    <property type="project" value="TreeGrafter"/>
</dbReference>
<dbReference type="GO" id="GO:0047437">
    <property type="term" value="F:4-oxalocrotonate decarboxylase activity"/>
    <property type="evidence" value="ECO:0007669"/>
    <property type="project" value="UniProtKB-EC"/>
</dbReference>
<dbReference type="GO" id="GO:0043640">
    <property type="term" value="P:benzoate catabolic process via hydroxylation"/>
    <property type="evidence" value="ECO:0007669"/>
    <property type="project" value="UniProtKB-UniPathway"/>
</dbReference>
<dbReference type="Gene3D" id="3.90.850.10">
    <property type="entry name" value="Fumarylacetoacetase-like, C-terminal domain"/>
    <property type="match status" value="1"/>
</dbReference>
<dbReference type="InterPro" id="IPR017630">
    <property type="entry name" value="4-oxalocrotonate_decarboxylase"/>
</dbReference>
<dbReference type="InterPro" id="IPR036663">
    <property type="entry name" value="Fumarylacetoacetase_C_sf"/>
</dbReference>
<dbReference type="InterPro" id="IPR050772">
    <property type="entry name" value="Hydratase-Decarb/MhpD_sf"/>
</dbReference>
<dbReference type="NCBIfam" id="TIGR03218">
    <property type="entry name" value="catechol_dmpH"/>
    <property type="match status" value="1"/>
</dbReference>
<dbReference type="PANTHER" id="PTHR30143:SF0">
    <property type="entry name" value="2-KETO-4-PENTENOATE HYDRATASE"/>
    <property type="match status" value="1"/>
</dbReference>
<dbReference type="PANTHER" id="PTHR30143">
    <property type="entry name" value="ACID HYDRATASE"/>
    <property type="match status" value="1"/>
</dbReference>
<dbReference type="SUPFAM" id="SSF56529">
    <property type="entry name" value="FAH"/>
    <property type="match status" value="1"/>
</dbReference>
<sequence>MNRTLTRDQVLALAEHIENAELDVHDIPKVTNDYPDMTFADAYDVQWEIRRRKEARGNKVVGLKMGLTSWAKMAQMGVETPIYGFLVDYFSVPDGGVVDTSKLIHPKIEAEISFVTKAPLHGPGCHIGQVLAATDFVIPTVEVIDSRYENFKFDLISVVADNASSTRFITGGQMANVADLDLRTLGVVMEKNGEVVELGAGAAVLGHPASSVAMLANLLAERGEHIPAGSFIMTGGITAAVPVAPGDNITVRYQGLCSVSARFI</sequence>
<evidence type="ECO:0000305" key="1"/>
<comment type="catalytic activity">
    <reaction>
        <text>(3E)-2-oxohex-3-enedioate + H(+) = 2-oxopent-4-enoate + CO2</text>
        <dbReference type="Rhea" id="RHEA:24260"/>
        <dbReference type="ChEBI" id="CHEBI:11641"/>
        <dbReference type="ChEBI" id="CHEBI:15378"/>
        <dbReference type="ChEBI" id="CHEBI:16526"/>
        <dbReference type="ChEBI" id="CHEBI:64908"/>
        <dbReference type="EC" id="4.1.1.77"/>
    </reaction>
</comment>
<comment type="pathway">
    <text>Aromatic compound metabolism; benzoate degradation via hydroxylation.</text>
</comment>
<comment type="similarity">
    <text evidence="1">Belongs to the hydratase/decarboxylase family.</text>
</comment>
<keyword id="KW-0058">Aromatic hydrocarbons catabolism</keyword>
<keyword id="KW-0456">Lyase</keyword>
<keyword id="KW-0614">Plasmid</keyword>
<accession>P49156</accession>
<protein>
    <recommendedName>
        <fullName>4-oxalocrotonate decarboxylase</fullName>
        <shortName>4-OD</shortName>
        <ecNumber>4.1.1.77</ecNumber>
    </recommendedName>
</protein>
<geneLocation type="plasmid">
    <name>pVI150</name>
</geneLocation>
<reference key="1">
    <citation type="journal article" date="1992" name="J. Bacteriol.">
        <title>Nucleotide sequence and functional analysis of the complete phenol/3,4-dimethylphenol catabolic pathway of Pseudomonas sp. strain CF600.</title>
        <authorList>
            <person name="Shingler V."/>
            <person name="Marklund U."/>
            <person name="Powlowski J."/>
        </authorList>
    </citation>
    <scope>NUCLEOTIDE SEQUENCE [GENOMIC DNA]</scope>
</reference>
<name>DMPH_PSEUF</name>